<accession>Q9H7P9</accession>
<accession>B8ZZK6</accession>
<accession>C9J0Y4</accession>
<accession>Q6DHV6</accession>
<accession>Q96BU2</accession>
<accession>Q96D18</accession>
<accession>Q9H699</accession>
<feature type="chain" id="PRO_0000306861" description="Pleckstrin homology domain-containing family G member 2">
    <location>
        <begin position="1"/>
        <end position="1386"/>
    </location>
</feature>
<feature type="domain" description="DH" evidence="2">
    <location>
        <begin position="102"/>
        <end position="283"/>
    </location>
</feature>
<feature type="domain" description="PH" evidence="3">
    <location>
        <begin position="313"/>
        <end position="411"/>
    </location>
</feature>
<feature type="region of interest" description="Disordered" evidence="4">
    <location>
        <begin position="1"/>
        <end position="21"/>
    </location>
</feature>
<feature type="region of interest" description="Disordered" evidence="4">
    <location>
        <begin position="36"/>
        <end position="82"/>
    </location>
</feature>
<feature type="region of interest" description="Disordered" evidence="4">
    <location>
        <begin position="436"/>
        <end position="540"/>
    </location>
</feature>
<feature type="region of interest" description="Disordered" evidence="4">
    <location>
        <begin position="554"/>
        <end position="612"/>
    </location>
</feature>
<feature type="region of interest" description="Disordered" evidence="4">
    <location>
        <begin position="701"/>
        <end position="739"/>
    </location>
</feature>
<feature type="region of interest" description="Disordered" evidence="4">
    <location>
        <begin position="790"/>
        <end position="815"/>
    </location>
</feature>
<feature type="region of interest" description="Disordered" evidence="4">
    <location>
        <begin position="829"/>
        <end position="859"/>
    </location>
</feature>
<feature type="region of interest" description="Disordered" evidence="4">
    <location>
        <begin position="1037"/>
        <end position="1099"/>
    </location>
</feature>
<feature type="region of interest" description="Disordered" evidence="4">
    <location>
        <begin position="1162"/>
        <end position="1191"/>
    </location>
</feature>
<feature type="region of interest" description="Disordered" evidence="4">
    <location>
        <begin position="1291"/>
        <end position="1333"/>
    </location>
</feature>
<feature type="region of interest" description="Disordered" evidence="4">
    <location>
        <begin position="1367"/>
        <end position="1386"/>
    </location>
</feature>
<feature type="compositionally biased region" description="Low complexity" evidence="4">
    <location>
        <begin position="8"/>
        <end position="17"/>
    </location>
</feature>
<feature type="compositionally biased region" description="Low complexity" evidence="4">
    <location>
        <begin position="45"/>
        <end position="62"/>
    </location>
</feature>
<feature type="compositionally biased region" description="Acidic residues" evidence="4">
    <location>
        <begin position="592"/>
        <end position="603"/>
    </location>
</feature>
<feature type="compositionally biased region" description="Polar residues" evidence="4">
    <location>
        <begin position="1048"/>
        <end position="1059"/>
    </location>
</feature>
<feature type="compositionally biased region" description="Polar residues" evidence="4">
    <location>
        <begin position="1073"/>
        <end position="1086"/>
    </location>
</feature>
<feature type="compositionally biased region" description="Low complexity" evidence="4">
    <location>
        <begin position="1301"/>
        <end position="1317"/>
    </location>
</feature>
<feature type="compositionally biased region" description="Pro residues" evidence="4">
    <location>
        <begin position="1318"/>
        <end position="1330"/>
    </location>
</feature>
<feature type="modified residue" description="Phosphoserine" evidence="14">
    <location>
        <position position="90"/>
    </location>
</feature>
<feature type="modified residue" description="Phosphothreonine" evidence="12 14">
    <location>
        <position position="445"/>
    </location>
</feature>
<feature type="modified residue" description="Phosphoserine" evidence="12">
    <location>
        <position position="450"/>
    </location>
</feature>
<feature type="modified residue" description="Phosphoserine" evidence="14">
    <location>
        <position position="469"/>
    </location>
</feature>
<feature type="modified residue" description="Phosphoserine" evidence="14">
    <location>
        <position position="911"/>
    </location>
</feature>
<feature type="modified residue" description="Phosphoserine" evidence="14">
    <location>
        <position position="1049"/>
    </location>
</feature>
<feature type="modified residue" description="Phosphothreonine" evidence="13 14">
    <location>
        <position position="1257"/>
    </location>
</feature>
<feature type="modified residue" description="Phosphoserine" evidence="14">
    <location>
        <position position="1261"/>
    </location>
</feature>
<feature type="modified residue" description="Phosphoserine" evidence="14">
    <location>
        <position position="1310"/>
    </location>
</feature>
<feature type="splice variant" id="VSP_028529" description="In isoform 3." evidence="10">
    <location>
        <begin position="468"/>
        <end position="496"/>
    </location>
</feature>
<feature type="splice variant" id="VSP_028530" description="In isoform 2." evidence="9">
    <location>
        <begin position="560"/>
        <end position="1368"/>
    </location>
</feature>
<feature type="sequence variant" id="VAR_078577" description="In LDAMD; results in impaired regulation of actin polymerization; dbSNP:rs201201843." evidence="8">
    <original>R</original>
    <variation>W</variation>
    <location>
        <position position="204"/>
    </location>
</feature>
<feature type="sequence variant" id="VAR_035324" description="In dbSNP:rs35904695.">
    <original>T</original>
    <variation>I</variation>
    <location>
        <position position="540"/>
    </location>
</feature>
<feature type="sequence variant" id="VAR_035325" description="In dbSNP:rs16973407.">
    <original>I</original>
    <variation>V</variation>
    <location>
        <position position="622"/>
    </location>
</feature>
<feature type="sequence variant" id="VAR_035326" description="In dbSNP:rs10407035." evidence="6">
    <original>R</original>
    <variation>H</variation>
    <location>
        <position position="647"/>
    </location>
</feature>
<feature type="sequence variant" id="VAR_035327" description="In dbSNP:rs31726." evidence="5 6">
    <original>R</original>
    <variation>K</variation>
    <location>
        <position position="992"/>
    </location>
</feature>
<feature type="sequence variant" id="VAR_035328" description="In dbSNP:rs34603507.">
    <original>A</original>
    <variation>T</variation>
    <location>
        <position position="1302"/>
    </location>
</feature>
<feature type="sequence variant" id="VAR_035329" description="In dbSNP:rs31728." evidence="5 6 14">
    <original>P</original>
    <variation>A</variation>
    <location>
        <position position="1329"/>
    </location>
</feature>
<comment type="function">
    <text evidence="1 7 8">May be a transforming oncogene with exchange activity for CDC42 (By similarity). May be a guanine-nucleotide exchange factor (GEF) for RAC1 and CDC42. Activated by the binding to subunits beta and gamma of the heterotrimeric guanine nucleotide-binding protein (G protein) (PubMed:18045877). Involved in the regulation of actin polymerization (PubMed:26573021).</text>
</comment>
<comment type="interaction">
    <interactant intactId="EBI-2797213">
        <id>Q9H7P9</id>
    </interactant>
    <interactant intactId="EBI-714158">
        <id>Q13526</id>
        <label>PIN1</label>
    </interactant>
    <organismsDiffer>false</organismsDiffer>
    <experiments>3</experiments>
</comment>
<comment type="interaction">
    <interactant intactId="EBI-10175686">
        <id>Q9H7P9-3</id>
    </interactant>
    <interactant intactId="EBI-10175581">
        <id>B2R8Y4</id>
    </interactant>
    <organismsDiffer>false</organismsDiffer>
    <experiments>3</experiments>
</comment>
<comment type="alternative products">
    <event type="alternative splicing"/>
    <isoform>
        <id>Q9H7P9-1</id>
        <name>1</name>
        <sequence type="displayed"/>
    </isoform>
    <isoform>
        <id>Q9H7P9-2</id>
        <name>2</name>
        <sequence type="described" ref="VSP_028530"/>
    </isoform>
    <isoform>
        <id>Q9H7P9-3</id>
        <name>3</name>
        <sequence type="described" ref="VSP_028529"/>
    </isoform>
</comment>
<comment type="disease" evidence="8">
    <disease id="DI-04639">
        <name>Leukodystrophy and acquired microcephaly with or without dystonia</name>
        <acronym>LDAMD</acronym>
        <description>An autosomal recessive neurologic disorder characterized by profound intellectual disability, dystonia, postnatal microcephaly, and white matter abnormalities consistent with leukodystrophy.</description>
        <dbReference type="MIM" id="616763"/>
    </disease>
    <text>The disease is caused by variants affecting the gene represented in this entry.</text>
</comment>
<comment type="sequence caution" evidence="11">
    <conflict type="frameshift">
        <sequence resource="EMBL-CDS" id="BAB15364"/>
    </conflict>
</comment>
<comment type="sequence caution" evidence="11">
    <conflict type="erroneous initiation">
        <sequence resource="EMBL-CDS" id="BAB15719"/>
    </conflict>
    <text>Extended N-terminus.</text>
</comment>
<proteinExistence type="evidence at protein level"/>
<gene>
    <name type="primary">PLEKHG2</name>
</gene>
<dbReference type="EMBL" id="AK024429">
    <property type="protein sequence ID" value="BAB15719.1"/>
    <property type="status" value="ALT_INIT"/>
    <property type="molecule type" value="mRNA"/>
</dbReference>
<dbReference type="EMBL" id="AK026111">
    <property type="protein sequence ID" value="BAB15364.1"/>
    <property type="status" value="ALT_FRAME"/>
    <property type="molecule type" value="mRNA"/>
</dbReference>
<dbReference type="EMBL" id="AC011500">
    <property type="status" value="NOT_ANNOTATED_CDS"/>
    <property type="molecule type" value="Genomic_DNA"/>
</dbReference>
<dbReference type="EMBL" id="CH471126">
    <property type="protein sequence ID" value="EAW56888.1"/>
    <property type="molecule type" value="Genomic_DNA"/>
</dbReference>
<dbReference type="EMBL" id="BC013426">
    <property type="protein sequence ID" value="AAH13426.2"/>
    <property type="molecule type" value="mRNA"/>
</dbReference>
<dbReference type="EMBL" id="BC015174">
    <property type="protein sequence ID" value="AAH15174.1"/>
    <property type="molecule type" value="mRNA"/>
</dbReference>
<dbReference type="EMBL" id="BC075858">
    <property type="protein sequence ID" value="AAH75858.1"/>
    <property type="molecule type" value="mRNA"/>
</dbReference>
<dbReference type="CCDS" id="CCDS33022.2">
    <molecule id="Q9H7P9-1"/>
</dbReference>
<dbReference type="CCDS" id="CCDS86766.1">
    <molecule id="Q9H7P9-2"/>
</dbReference>
<dbReference type="RefSeq" id="NP_001338623.1">
    <molecule id="Q9H7P9-2"/>
    <property type="nucleotide sequence ID" value="NM_001351694.2"/>
</dbReference>
<dbReference type="RefSeq" id="NP_073746.2">
    <molecule id="Q9H7P9-1"/>
    <property type="nucleotide sequence ID" value="NM_022835.3"/>
</dbReference>
<dbReference type="RefSeq" id="XP_005259220.1">
    <property type="nucleotide sequence ID" value="XM_005259163.2"/>
</dbReference>
<dbReference type="SMR" id="Q9H7P9"/>
<dbReference type="BioGRID" id="122330">
    <property type="interactions" value="29"/>
</dbReference>
<dbReference type="FunCoup" id="Q9H7P9">
    <property type="interactions" value="384"/>
</dbReference>
<dbReference type="IntAct" id="Q9H7P9">
    <property type="interactions" value="21"/>
</dbReference>
<dbReference type="STRING" id="9606.ENSP00000392906"/>
<dbReference type="GlyCosmos" id="Q9H7P9">
    <property type="glycosylation" value="1 site, 1 glycan"/>
</dbReference>
<dbReference type="GlyGen" id="Q9H7P9">
    <property type="glycosylation" value="3 sites, 1 O-linked glycan (1 site)"/>
</dbReference>
<dbReference type="iPTMnet" id="Q9H7P9"/>
<dbReference type="PhosphoSitePlus" id="Q9H7P9"/>
<dbReference type="BioMuta" id="PLEKHG2"/>
<dbReference type="DMDM" id="296439273"/>
<dbReference type="jPOST" id="Q9H7P9"/>
<dbReference type="MassIVE" id="Q9H7P9"/>
<dbReference type="PaxDb" id="9606-ENSP00000392906"/>
<dbReference type="PeptideAtlas" id="Q9H7P9"/>
<dbReference type="ProteomicsDB" id="81135">
    <molecule id="Q9H7P9-1"/>
</dbReference>
<dbReference type="ProteomicsDB" id="81136">
    <molecule id="Q9H7P9-2"/>
</dbReference>
<dbReference type="ProteomicsDB" id="81137">
    <molecule id="Q9H7P9-3"/>
</dbReference>
<dbReference type="Pumba" id="Q9H7P9"/>
<dbReference type="Antibodypedia" id="30324">
    <property type="antibodies" value="48 antibodies from 13 providers"/>
</dbReference>
<dbReference type="DNASU" id="64857"/>
<dbReference type="Ensembl" id="ENST00000409797.6">
    <molecule id="Q9H7P9-2"/>
    <property type="protein sequence ID" value="ENSP00000386492.1"/>
    <property type="gene ID" value="ENSG00000090924.15"/>
</dbReference>
<dbReference type="Ensembl" id="ENST00000425673.6">
    <molecule id="Q9H7P9-1"/>
    <property type="protein sequence ID" value="ENSP00000392906.2"/>
    <property type="gene ID" value="ENSG00000090924.15"/>
</dbReference>
<dbReference type="GeneID" id="64857"/>
<dbReference type="KEGG" id="hsa:64857"/>
<dbReference type="MANE-Select" id="ENST00000425673.6">
    <property type="protein sequence ID" value="ENSP00000392906.2"/>
    <property type="RefSeq nucleotide sequence ID" value="NM_022835.3"/>
    <property type="RefSeq protein sequence ID" value="NP_073746.2"/>
</dbReference>
<dbReference type="UCSC" id="uc002olj.4">
    <molecule id="Q9H7P9-1"/>
    <property type="organism name" value="human"/>
</dbReference>
<dbReference type="AGR" id="HGNC:29515"/>
<dbReference type="CTD" id="64857"/>
<dbReference type="DisGeNET" id="64857"/>
<dbReference type="GeneCards" id="PLEKHG2"/>
<dbReference type="HGNC" id="HGNC:29515">
    <property type="gene designation" value="PLEKHG2"/>
</dbReference>
<dbReference type="HPA" id="ENSG00000090924">
    <property type="expression patterns" value="Low tissue specificity"/>
</dbReference>
<dbReference type="MalaCards" id="PLEKHG2"/>
<dbReference type="MIM" id="611893">
    <property type="type" value="gene"/>
</dbReference>
<dbReference type="MIM" id="616763">
    <property type="type" value="phenotype"/>
</dbReference>
<dbReference type="neXtProt" id="NX_Q9H7P9"/>
<dbReference type="OpenTargets" id="ENSG00000090924"/>
<dbReference type="PharmGKB" id="PA134893492"/>
<dbReference type="VEuPathDB" id="HostDB:ENSG00000090924"/>
<dbReference type="eggNOG" id="KOG3518">
    <property type="taxonomic scope" value="Eukaryota"/>
</dbReference>
<dbReference type="GeneTree" id="ENSGT00940000162093"/>
<dbReference type="HOGENOM" id="CLU_007452_0_0_1"/>
<dbReference type="InParanoid" id="Q9H7P9"/>
<dbReference type="OMA" id="EPMKDPY"/>
<dbReference type="OrthoDB" id="1594986at2759"/>
<dbReference type="PAN-GO" id="Q9H7P9">
    <property type="GO annotations" value="0 GO annotations based on evolutionary models"/>
</dbReference>
<dbReference type="PhylomeDB" id="Q9H7P9"/>
<dbReference type="TreeFam" id="TF328565"/>
<dbReference type="PathwayCommons" id="Q9H7P9"/>
<dbReference type="Reactome" id="R-HSA-193648">
    <property type="pathway name" value="NRAGE signals death through JNK"/>
</dbReference>
<dbReference type="Reactome" id="R-HSA-416482">
    <property type="pathway name" value="G alpha (12/13) signalling events"/>
</dbReference>
<dbReference type="Reactome" id="R-HSA-9013148">
    <property type="pathway name" value="CDC42 GTPase cycle"/>
</dbReference>
<dbReference type="Reactome" id="R-HSA-9013149">
    <property type="pathway name" value="RAC1 GTPase cycle"/>
</dbReference>
<dbReference type="SignaLink" id="Q9H7P9"/>
<dbReference type="SIGNOR" id="Q9H7P9"/>
<dbReference type="BioGRID-ORCS" id="64857">
    <property type="hits" value="62 hits in 1156 CRISPR screens"/>
</dbReference>
<dbReference type="ChiTaRS" id="PLEKHG2">
    <property type="organism name" value="human"/>
</dbReference>
<dbReference type="GenomeRNAi" id="64857"/>
<dbReference type="Pharos" id="Q9H7P9">
    <property type="development level" value="Tbio"/>
</dbReference>
<dbReference type="PRO" id="PR:Q9H7P9"/>
<dbReference type="Proteomes" id="UP000005640">
    <property type="component" value="Chromosome 19"/>
</dbReference>
<dbReference type="RNAct" id="Q9H7P9">
    <property type="molecule type" value="protein"/>
</dbReference>
<dbReference type="Bgee" id="ENSG00000090924">
    <property type="expression patterns" value="Expressed in sural nerve and 117 other cell types or tissues"/>
</dbReference>
<dbReference type="ExpressionAtlas" id="Q9H7P9">
    <property type="expression patterns" value="baseline and differential"/>
</dbReference>
<dbReference type="GO" id="GO:0005829">
    <property type="term" value="C:cytosol"/>
    <property type="evidence" value="ECO:0000304"/>
    <property type="project" value="Reactome"/>
</dbReference>
<dbReference type="GO" id="GO:0005085">
    <property type="term" value="F:guanyl-nucleotide exchange factor activity"/>
    <property type="evidence" value="ECO:0000318"/>
    <property type="project" value="GO_Central"/>
</dbReference>
<dbReference type="GO" id="GO:0031267">
    <property type="term" value="F:small GTPase binding"/>
    <property type="evidence" value="ECO:0000318"/>
    <property type="project" value="GO_Central"/>
</dbReference>
<dbReference type="GO" id="GO:0030833">
    <property type="term" value="P:regulation of actin filament polymerization"/>
    <property type="evidence" value="ECO:0000315"/>
    <property type="project" value="UniProtKB"/>
</dbReference>
<dbReference type="CDD" id="cd13243">
    <property type="entry name" value="PH_PLEKHG1_G2_G3"/>
    <property type="match status" value="1"/>
</dbReference>
<dbReference type="CDD" id="cd00160">
    <property type="entry name" value="RhoGEF"/>
    <property type="match status" value="1"/>
</dbReference>
<dbReference type="FunFam" id="1.20.900.10:FF:000019">
    <property type="entry name" value="Pleckstrin homology domain-containing family G member 1"/>
    <property type="match status" value="1"/>
</dbReference>
<dbReference type="FunFam" id="2.30.29.30:FF:000132">
    <property type="entry name" value="pleckstrin homology domain-containing family G member 2"/>
    <property type="match status" value="1"/>
</dbReference>
<dbReference type="Gene3D" id="1.20.900.10">
    <property type="entry name" value="Dbl homology (DH) domain"/>
    <property type="match status" value="1"/>
</dbReference>
<dbReference type="Gene3D" id="2.30.29.30">
    <property type="entry name" value="Pleckstrin-homology domain (PH domain)/Phosphotyrosine-binding domain (PTB)"/>
    <property type="match status" value="1"/>
</dbReference>
<dbReference type="InterPro" id="IPR035899">
    <property type="entry name" value="DBL_dom_sf"/>
</dbReference>
<dbReference type="InterPro" id="IPR000219">
    <property type="entry name" value="DH_dom"/>
</dbReference>
<dbReference type="InterPro" id="IPR011993">
    <property type="entry name" value="PH-like_dom_sf"/>
</dbReference>
<dbReference type="InterPro" id="IPR001849">
    <property type="entry name" value="PH_domain"/>
</dbReference>
<dbReference type="InterPro" id="IPR043324">
    <property type="entry name" value="PH_PLEKHG1_G2_G3"/>
</dbReference>
<dbReference type="InterPro" id="IPR055251">
    <property type="entry name" value="SOS1_NGEF_PH"/>
</dbReference>
<dbReference type="PANTHER" id="PTHR45924">
    <property type="entry name" value="FI17866P1"/>
    <property type="match status" value="1"/>
</dbReference>
<dbReference type="PANTHER" id="PTHR45924:SF3">
    <property type="entry name" value="PLECKSTRIN HOMOLOGY DOMAIN-CONTAINING FAMILY G MEMBER 2"/>
    <property type="match status" value="1"/>
</dbReference>
<dbReference type="Pfam" id="PF00621">
    <property type="entry name" value="RhoGEF"/>
    <property type="match status" value="1"/>
</dbReference>
<dbReference type="Pfam" id="PF22697">
    <property type="entry name" value="SOS1_NGEF_PH"/>
    <property type="match status" value="1"/>
</dbReference>
<dbReference type="SMART" id="SM00233">
    <property type="entry name" value="PH"/>
    <property type="match status" value="1"/>
</dbReference>
<dbReference type="SMART" id="SM00325">
    <property type="entry name" value="RhoGEF"/>
    <property type="match status" value="1"/>
</dbReference>
<dbReference type="SUPFAM" id="SSF48065">
    <property type="entry name" value="DBL homology domain (DH-domain)"/>
    <property type="match status" value="1"/>
</dbReference>
<dbReference type="SUPFAM" id="SSF50729">
    <property type="entry name" value="PH domain-like"/>
    <property type="match status" value="1"/>
</dbReference>
<dbReference type="PROSITE" id="PS50010">
    <property type="entry name" value="DH_2"/>
    <property type="match status" value="1"/>
</dbReference>
<dbReference type="PROSITE" id="PS50003">
    <property type="entry name" value="PH_DOMAIN"/>
    <property type="match status" value="1"/>
</dbReference>
<reference key="1">
    <citation type="journal article" date="2004" name="Nat. Genet.">
        <title>Complete sequencing and characterization of 21,243 full-length human cDNAs.</title>
        <authorList>
            <person name="Ota T."/>
            <person name="Suzuki Y."/>
            <person name="Nishikawa T."/>
            <person name="Otsuki T."/>
            <person name="Sugiyama T."/>
            <person name="Irie R."/>
            <person name="Wakamatsu A."/>
            <person name="Hayashi K."/>
            <person name="Sato H."/>
            <person name="Nagai K."/>
            <person name="Kimura K."/>
            <person name="Makita H."/>
            <person name="Sekine M."/>
            <person name="Obayashi M."/>
            <person name="Nishi T."/>
            <person name="Shibahara T."/>
            <person name="Tanaka T."/>
            <person name="Ishii S."/>
            <person name="Yamamoto J."/>
            <person name="Saito K."/>
            <person name="Kawai Y."/>
            <person name="Isono Y."/>
            <person name="Nakamura Y."/>
            <person name="Nagahari K."/>
            <person name="Murakami K."/>
            <person name="Yasuda T."/>
            <person name="Iwayanagi T."/>
            <person name="Wagatsuma M."/>
            <person name="Shiratori A."/>
            <person name="Sudo H."/>
            <person name="Hosoiri T."/>
            <person name="Kaku Y."/>
            <person name="Kodaira H."/>
            <person name="Kondo H."/>
            <person name="Sugawara M."/>
            <person name="Takahashi M."/>
            <person name="Kanda K."/>
            <person name="Yokoi T."/>
            <person name="Furuya T."/>
            <person name="Kikkawa E."/>
            <person name="Omura Y."/>
            <person name="Abe K."/>
            <person name="Kamihara K."/>
            <person name="Katsuta N."/>
            <person name="Sato K."/>
            <person name="Tanikawa M."/>
            <person name="Yamazaki M."/>
            <person name="Ninomiya K."/>
            <person name="Ishibashi T."/>
            <person name="Yamashita H."/>
            <person name="Murakawa K."/>
            <person name="Fujimori K."/>
            <person name="Tanai H."/>
            <person name="Kimata M."/>
            <person name="Watanabe M."/>
            <person name="Hiraoka S."/>
            <person name="Chiba Y."/>
            <person name="Ishida S."/>
            <person name="Ono Y."/>
            <person name="Takiguchi S."/>
            <person name="Watanabe S."/>
            <person name="Yosida M."/>
            <person name="Hotuta T."/>
            <person name="Kusano J."/>
            <person name="Kanehori K."/>
            <person name="Takahashi-Fujii A."/>
            <person name="Hara H."/>
            <person name="Tanase T.-O."/>
            <person name="Nomura Y."/>
            <person name="Togiya S."/>
            <person name="Komai F."/>
            <person name="Hara R."/>
            <person name="Takeuchi K."/>
            <person name="Arita M."/>
            <person name="Imose N."/>
            <person name="Musashino K."/>
            <person name="Yuuki H."/>
            <person name="Oshima A."/>
            <person name="Sasaki N."/>
            <person name="Aotsuka S."/>
            <person name="Yoshikawa Y."/>
            <person name="Matsunawa H."/>
            <person name="Ichihara T."/>
            <person name="Shiohata N."/>
            <person name="Sano S."/>
            <person name="Moriya S."/>
            <person name="Momiyama H."/>
            <person name="Satoh N."/>
            <person name="Takami S."/>
            <person name="Terashima Y."/>
            <person name="Suzuki O."/>
            <person name="Nakagawa S."/>
            <person name="Senoh A."/>
            <person name="Mizoguchi H."/>
            <person name="Goto Y."/>
            <person name="Shimizu F."/>
            <person name="Wakebe H."/>
            <person name="Hishigaki H."/>
            <person name="Watanabe T."/>
            <person name="Sugiyama A."/>
            <person name="Takemoto M."/>
            <person name="Kawakami B."/>
            <person name="Yamazaki M."/>
            <person name="Watanabe K."/>
            <person name="Kumagai A."/>
            <person name="Itakura S."/>
            <person name="Fukuzumi Y."/>
            <person name="Fujimori Y."/>
            <person name="Komiyama M."/>
            <person name="Tashiro H."/>
            <person name="Tanigami A."/>
            <person name="Fujiwara T."/>
            <person name="Ono T."/>
            <person name="Yamada K."/>
            <person name="Fujii Y."/>
            <person name="Ozaki K."/>
            <person name="Hirao M."/>
            <person name="Ohmori Y."/>
            <person name="Kawabata A."/>
            <person name="Hikiji T."/>
            <person name="Kobatake N."/>
            <person name="Inagaki H."/>
            <person name="Ikema Y."/>
            <person name="Okamoto S."/>
            <person name="Okitani R."/>
            <person name="Kawakami T."/>
            <person name="Noguchi S."/>
            <person name="Itoh T."/>
            <person name="Shigeta K."/>
            <person name="Senba T."/>
            <person name="Matsumura K."/>
            <person name="Nakajima Y."/>
            <person name="Mizuno T."/>
            <person name="Morinaga M."/>
            <person name="Sasaki M."/>
            <person name="Togashi T."/>
            <person name="Oyama M."/>
            <person name="Hata H."/>
            <person name="Watanabe M."/>
            <person name="Komatsu T."/>
            <person name="Mizushima-Sugano J."/>
            <person name="Satoh T."/>
            <person name="Shirai Y."/>
            <person name="Takahashi Y."/>
            <person name="Nakagawa K."/>
            <person name="Okumura K."/>
            <person name="Nagase T."/>
            <person name="Nomura N."/>
            <person name="Kikuchi H."/>
            <person name="Masuho Y."/>
            <person name="Yamashita R."/>
            <person name="Nakai K."/>
            <person name="Yada T."/>
            <person name="Nakamura Y."/>
            <person name="Ohara O."/>
            <person name="Isogai T."/>
            <person name="Sugano S."/>
        </authorList>
    </citation>
    <scope>NUCLEOTIDE SEQUENCE [LARGE SCALE MRNA] (ISOFORMS 1 AND 2)</scope>
    <scope>VARIANTS LYS-992 AND ALA-1329</scope>
    <source>
        <tissue>Spleen</tissue>
    </source>
</reference>
<reference key="2">
    <citation type="journal article" date="2004" name="Nature">
        <title>The DNA sequence and biology of human chromosome 19.</title>
        <authorList>
            <person name="Grimwood J."/>
            <person name="Gordon L.A."/>
            <person name="Olsen A.S."/>
            <person name="Terry A."/>
            <person name="Schmutz J."/>
            <person name="Lamerdin J.E."/>
            <person name="Hellsten U."/>
            <person name="Goodstein D."/>
            <person name="Couronne O."/>
            <person name="Tran-Gyamfi M."/>
            <person name="Aerts A."/>
            <person name="Altherr M."/>
            <person name="Ashworth L."/>
            <person name="Bajorek E."/>
            <person name="Black S."/>
            <person name="Branscomb E."/>
            <person name="Caenepeel S."/>
            <person name="Carrano A.V."/>
            <person name="Caoile C."/>
            <person name="Chan Y.M."/>
            <person name="Christensen M."/>
            <person name="Cleland C.A."/>
            <person name="Copeland A."/>
            <person name="Dalin E."/>
            <person name="Dehal P."/>
            <person name="Denys M."/>
            <person name="Detter J.C."/>
            <person name="Escobar J."/>
            <person name="Flowers D."/>
            <person name="Fotopulos D."/>
            <person name="Garcia C."/>
            <person name="Georgescu A.M."/>
            <person name="Glavina T."/>
            <person name="Gomez M."/>
            <person name="Gonzales E."/>
            <person name="Groza M."/>
            <person name="Hammon N."/>
            <person name="Hawkins T."/>
            <person name="Haydu L."/>
            <person name="Ho I."/>
            <person name="Huang W."/>
            <person name="Israni S."/>
            <person name="Jett J."/>
            <person name="Kadner K."/>
            <person name="Kimball H."/>
            <person name="Kobayashi A."/>
            <person name="Larionov V."/>
            <person name="Leem S.-H."/>
            <person name="Lopez F."/>
            <person name="Lou Y."/>
            <person name="Lowry S."/>
            <person name="Malfatti S."/>
            <person name="Martinez D."/>
            <person name="McCready P.M."/>
            <person name="Medina C."/>
            <person name="Morgan J."/>
            <person name="Nelson K."/>
            <person name="Nolan M."/>
            <person name="Ovcharenko I."/>
            <person name="Pitluck S."/>
            <person name="Pollard M."/>
            <person name="Popkie A.P."/>
            <person name="Predki P."/>
            <person name="Quan G."/>
            <person name="Ramirez L."/>
            <person name="Rash S."/>
            <person name="Retterer J."/>
            <person name="Rodriguez A."/>
            <person name="Rogers S."/>
            <person name="Salamov A."/>
            <person name="Salazar A."/>
            <person name="She X."/>
            <person name="Smith D."/>
            <person name="Slezak T."/>
            <person name="Solovyev V."/>
            <person name="Thayer N."/>
            <person name="Tice H."/>
            <person name="Tsai M."/>
            <person name="Ustaszewska A."/>
            <person name="Vo N."/>
            <person name="Wagner M."/>
            <person name="Wheeler J."/>
            <person name="Wu K."/>
            <person name="Xie G."/>
            <person name="Yang J."/>
            <person name="Dubchak I."/>
            <person name="Furey T.S."/>
            <person name="DeJong P."/>
            <person name="Dickson M."/>
            <person name="Gordon D."/>
            <person name="Eichler E.E."/>
            <person name="Pennacchio L.A."/>
            <person name="Richardson P."/>
            <person name="Stubbs L."/>
            <person name="Rokhsar D.S."/>
            <person name="Myers R.M."/>
            <person name="Rubin E.M."/>
            <person name="Lucas S.M."/>
        </authorList>
    </citation>
    <scope>NUCLEOTIDE SEQUENCE [LARGE SCALE GENOMIC DNA]</scope>
</reference>
<reference key="3">
    <citation type="submission" date="2005-07" db="EMBL/GenBank/DDBJ databases">
        <authorList>
            <person name="Mural R.J."/>
            <person name="Istrail S."/>
            <person name="Sutton G.G."/>
            <person name="Florea L."/>
            <person name="Halpern A.L."/>
            <person name="Mobarry C.M."/>
            <person name="Lippert R."/>
            <person name="Walenz B."/>
            <person name="Shatkay H."/>
            <person name="Dew I."/>
            <person name="Miller J.R."/>
            <person name="Flanigan M.J."/>
            <person name="Edwards N.J."/>
            <person name="Bolanos R."/>
            <person name="Fasulo D."/>
            <person name="Halldorsson B.V."/>
            <person name="Hannenhalli S."/>
            <person name="Turner R."/>
            <person name="Yooseph S."/>
            <person name="Lu F."/>
            <person name="Nusskern D.R."/>
            <person name="Shue B.C."/>
            <person name="Zheng X.H."/>
            <person name="Zhong F."/>
            <person name="Delcher A.L."/>
            <person name="Huson D.H."/>
            <person name="Kravitz S.A."/>
            <person name="Mouchard L."/>
            <person name="Reinert K."/>
            <person name="Remington K.A."/>
            <person name="Clark A.G."/>
            <person name="Waterman M.S."/>
            <person name="Eichler E.E."/>
            <person name="Adams M.D."/>
            <person name="Hunkapiller M.W."/>
            <person name="Myers E.W."/>
            <person name="Venter J.C."/>
        </authorList>
    </citation>
    <scope>NUCLEOTIDE SEQUENCE [LARGE SCALE GENOMIC DNA]</scope>
</reference>
<reference key="4">
    <citation type="journal article" date="2004" name="Genome Res.">
        <title>The status, quality, and expansion of the NIH full-length cDNA project: the Mammalian Gene Collection (MGC).</title>
        <authorList>
            <consortium name="The MGC Project Team"/>
        </authorList>
    </citation>
    <scope>NUCLEOTIDE SEQUENCE [LARGE SCALE MRNA] OF 105-1386 (ISOFORM 3)</scope>
    <scope>NUCLEOTIDE SEQUENCE [LARGE SCALE MRNA] OF 396-1386 (ISOFORM 1)</scope>
    <scope>VARIANTS HIS-647; LYS-992 AND ALA-1329</scope>
    <source>
        <tissue>Pancreas</tissue>
    </source>
</reference>
<reference key="5">
    <citation type="journal article" date="2008" name="J. Biol. Chem.">
        <title>Heterotrimeric G protein betagamma subunits stimulate FLJ00018, a guanine nucleotide exchange factor for Rac1 and Cdc42.</title>
        <authorList>
            <person name="Ueda H."/>
            <person name="Nagae R."/>
            <person name="Kozawa M."/>
            <person name="Morishita R."/>
            <person name="Kimura S."/>
            <person name="Nagase T."/>
            <person name="Ohara O."/>
            <person name="Yoshida S."/>
            <person name="Asano T."/>
        </authorList>
    </citation>
    <scope>FUNCTION</scope>
</reference>
<reference key="6">
    <citation type="journal article" date="2008" name="Proc. Natl. Acad. Sci. U.S.A.">
        <title>A quantitative atlas of mitotic phosphorylation.</title>
        <authorList>
            <person name="Dephoure N."/>
            <person name="Zhou C."/>
            <person name="Villen J."/>
            <person name="Beausoleil S.A."/>
            <person name="Bakalarski C.E."/>
            <person name="Elledge S.J."/>
            <person name="Gygi S.P."/>
        </authorList>
    </citation>
    <scope>PHOSPHORYLATION [LARGE SCALE ANALYSIS] AT THR-445 AND SER-450</scope>
    <scope>IDENTIFICATION BY MASS SPECTROMETRY [LARGE SCALE ANALYSIS]</scope>
    <source>
        <tissue>Cervix carcinoma</tissue>
    </source>
</reference>
<reference key="7">
    <citation type="journal article" date="2011" name="Sci. Signal.">
        <title>System-wide temporal characterization of the proteome and phosphoproteome of human embryonic stem cell differentiation.</title>
        <authorList>
            <person name="Rigbolt K.T."/>
            <person name="Prokhorova T.A."/>
            <person name="Akimov V."/>
            <person name="Henningsen J."/>
            <person name="Johansen P.T."/>
            <person name="Kratchmarova I."/>
            <person name="Kassem M."/>
            <person name="Mann M."/>
            <person name="Olsen J.V."/>
            <person name="Blagoev B."/>
        </authorList>
    </citation>
    <scope>PHOSPHORYLATION [LARGE SCALE ANALYSIS] AT THR-1257</scope>
    <scope>IDENTIFICATION BY MASS SPECTROMETRY [LARGE SCALE ANALYSIS]</scope>
</reference>
<reference key="8">
    <citation type="journal article" date="2013" name="J. Proteome Res.">
        <title>Toward a comprehensive characterization of a human cancer cell phosphoproteome.</title>
        <authorList>
            <person name="Zhou H."/>
            <person name="Di Palma S."/>
            <person name="Preisinger C."/>
            <person name="Peng M."/>
            <person name="Polat A.N."/>
            <person name="Heck A.J."/>
            <person name="Mohammed S."/>
        </authorList>
    </citation>
    <scope>PHOSPHORYLATION [LARGE SCALE ANALYSIS] AT SER-90; THR-445; SER-469; SER-911; SER-1049; THR-1257; SER-1261 AND SER-1310</scope>
    <scope>VARIANT [LARGE SCALE ANALYSIS] ALA-1329</scope>
    <scope>IDENTIFICATION BY MASS SPECTROMETRY [LARGE SCALE ANALYSIS]</scope>
    <source>
        <tissue>Cervix carcinoma</tissue>
        <tissue>Erythroleukemia</tissue>
    </source>
</reference>
<reference key="9">
    <citation type="journal article" date="2016" name="Neurogenetics">
        <title>Microcephaly-dystonia due to mutated PLEKHG2 with impaired actin polymerization.</title>
        <authorList>
            <person name="Edvardson S."/>
            <person name="Wang H."/>
            <person name="Dor T."/>
            <person name="Atawneh O."/>
            <person name="Yaacov B."/>
            <person name="Gartner J."/>
            <person name="Cinnamon Y."/>
            <person name="Chen S."/>
            <person name="Elpeleg O."/>
        </authorList>
    </citation>
    <scope>FUNCTION</scope>
    <scope>INVOLVEMENT IN LDAMD</scope>
    <scope>VARIANT LDAMD TRP-204</scope>
    <scope>CHARACTERIZATION OF VARIANT LDAMD TRP-204</scope>
</reference>
<name>PKHG2_HUMAN</name>
<evidence type="ECO:0000250" key="1">
    <source>
        <dbReference type="UniProtKB" id="Q6KAU7"/>
    </source>
</evidence>
<evidence type="ECO:0000255" key="2">
    <source>
        <dbReference type="PROSITE-ProRule" id="PRU00062"/>
    </source>
</evidence>
<evidence type="ECO:0000255" key="3">
    <source>
        <dbReference type="PROSITE-ProRule" id="PRU00145"/>
    </source>
</evidence>
<evidence type="ECO:0000256" key="4">
    <source>
        <dbReference type="SAM" id="MobiDB-lite"/>
    </source>
</evidence>
<evidence type="ECO:0000269" key="5">
    <source>
    </source>
</evidence>
<evidence type="ECO:0000269" key="6">
    <source>
    </source>
</evidence>
<evidence type="ECO:0000269" key="7">
    <source>
    </source>
</evidence>
<evidence type="ECO:0000269" key="8">
    <source>
    </source>
</evidence>
<evidence type="ECO:0000303" key="9">
    <source>
    </source>
</evidence>
<evidence type="ECO:0000303" key="10">
    <source>
    </source>
</evidence>
<evidence type="ECO:0000305" key="11"/>
<evidence type="ECO:0007744" key="12">
    <source>
    </source>
</evidence>
<evidence type="ECO:0007744" key="13">
    <source>
    </source>
</evidence>
<evidence type="ECO:0007744" key="14">
    <source>
    </source>
</evidence>
<keyword id="KW-0025">Alternative splicing</keyword>
<keyword id="KW-0225">Disease variant</keyword>
<keyword id="KW-0344">Guanine-nucleotide releasing factor</keyword>
<keyword id="KW-0991">Intellectual disability</keyword>
<keyword id="KW-1026">Leukodystrophy</keyword>
<keyword id="KW-0597">Phosphoprotein</keyword>
<keyword id="KW-1267">Proteomics identification</keyword>
<keyword id="KW-1185">Reference proteome</keyword>
<keyword id="KW-0043">Tumor suppressor</keyword>
<sequence>MPEGAQGLSLSKPSPSLGCGRRGEVCDCGTVCETRTAPAAPTMASPRGSGSSTSLSTVGSEGDPAPGPTPACSASRPEPLPGPPIRLHLSPVGIPGSARPSRLERVAREIVETERAYVRDLRSIVEDYLGPLLDGGVLGLSVEQVGTLFANIEDIYEFSSELLEDLENSSSAGGIAECFVQRSEDFDIYTLYCMNYPSSLALLRELSLSPPAALWLQERQAQLRHSLPLQSFLLKPVQRILKYHLLLQELGKHWAEGPGTGGREMVEEAIVSMTAVAWYINDMKRKQEHAARLQEVQRRLGGWTGPELSAFGELVLEGAFRGGGGGGPRLRGGERLLFLFSRMLLVAKRRGLEYTYKGHIFCCNLSVSESPRDPLGFKVSDLTIPKHRHLLQAKNQEEKRLWIHCLQRLFFENHPASIPAKAKQVLLENSLHCAPKSKPVLEPLTPPLGSPRPRDARSFTPGRRNTAPSPGPSVIRRGRRQSEPVKDPYVMFPQNAKPGFKHAGSEGELYPPESQPPVSGSAPPEDLEDAGPPTLDPSGTSITEEILELLNQRGLRDPGPSTHDIPKFPGDSQVPGDSETLTFQALPSRDSSEEEEEEEEGLEMDERGPSPLHVLEGLESSIAAEMPSIPCLTKIPDVPNLPEIPSRCEIPEGSRLPSLSDISDVFEMPCLPAIPSVPNTPSLSSTPTLSCDSWLQGPLQEPAEAPATRRELFSGSNPGKLGEPPSGGKAGPEEDEEGVSFTDFQPQDVTQHQGFPDELAFRSCSEIRSAWQALEQGQLARPGFPEPLLILEDSDLGGDSGSGKAGAPSSERTASRVRELARLYSERIQQMQRAETRASANAPRRRPRVLAQPQPSPCLPQEQAEPGLLPAFGHVLVCELAFPLTCAQESVPLGPAVWVQAAIPLSKQGGSPDGQGLHVSNLPKQDLPGIHVSAATLLPEQGGSRHVQAPAATPLPKQEGPLHLQVPALTTFSDQGHPEIQVPATTPLPEHRSHMVIPAPSTAFCPEQGHCADIHVPTTPALPKEICSDFTVSVTTPVPKQEGHLDSESPTNIPLTKQGGSRDVQGPDPVCSQPIQPLSWHGSSLDPQGPGDTLPPLPCHLPDLQIPGTSPLPAHGSHLDHRIPANAPLSLSQELPDTQVPATTPLPLPQVLTDIWVQALPTSPKQGSLPDIQGPAAAPPLPEPSLTDTQVQKLTPSLEQKSLIDAHVPAATPLPERGGSLDIQGLSPTPVQTTMVLSKPGGSLASHVARLESSDLTPPHSPPPSSRQLLGPNAAALSRYLAASYISQSLARRQGPGGGAPAASRGSWSSAPTSRASSPPPQPQPPPPPARRLSYATTVNIHVGGGGRLRPAKAQVRLNHPALLASTQESMGLHRAQGAPDAPFHM</sequence>
<protein>
    <recommendedName>
        <fullName>Pleckstrin homology domain-containing family G member 2</fullName>
        <shortName>PH domain-containing family G member 2</shortName>
    </recommendedName>
</protein>
<organism>
    <name type="scientific">Homo sapiens</name>
    <name type="common">Human</name>
    <dbReference type="NCBI Taxonomy" id="9606"/>
    <lineage>
        <taxon>Eukaryota</taxon>
        <taxon>Metazoa</taxon>
        <taxon>Chordata</taxon>
        <taxon>Craniata</taxon>
        <taxon>Vertebrata</taxon>
        <taxon>Euteleostomi</taxon>
        <taxon>Mammalia</taxon>
        <taxon>Eutheria</taxon>
        <taxon>Euarchontoglires</taxon>
        <taxon>Primates</taxon>
        <taxon>Haplorrhini</taxon>
        <taxon>Catarrhini</taxon>
        <taxon>Hominidae</taxon>
        <taxon>Homo</taxon>
    </lineage>
</organism>